<dbReference type="EMBL" id="CR855581">
    <property type="protein sequence ID" value="CAJ82277.1"/>
    <property type="molecule type" value="mRNA"/>
</dbReference>
<dbReference type="EMBL" id="BC135236">
    <property type="protein sequence ID" value="AAI35237.1"/>
    <property type="molecule type" value="mRNA"/>
</dbReference>
<dbReference type="RefSeq" id="NP_001016809.1">
    <property type="nucleotide sequence ID" value="NM_001016809.2"/>
</dbReference>
<dbReference type="RefSeq" id="XP_012812454.1">
    <property type="nucleotide sequence ID" value="XM_012957000.3"/>
</dbReference>
<dbReference type="RefSeq" id="XP_012812455.1">
    <property type="nucleotide sequence ID" value="XM_012957001.2"/>
</dbReference>
<dbReference type="RefSeq" id="XP_017946757.1">
    <property type="nucleotide sequence ID" value="XM_018091268.1"/>
</dbReference>
<dbReference type="RefSeq" id="XP_031751843.1">
    <property type="nucleotide sequence ID" value="XM_031895983.1"/>
</dbReference>
<dbReference type="SMR" id="Q28DC9"/>
<dbReference type="FunCoup" id="Q28DC9">
    <property type="interactions" value="974"/>
</dbReference>
<dbReference type="STRING" id="8364.ENSXETP00000054588"/>
<dbReference type="PaxDb" id="8364-ENSXETP00000042121"/>
<dbReference type="DNASU" id="549563"/>
<dbReference type="GeneID" id="549563"/>
<dbReference type="KEGG" id="xtr:549563"/>
<dbReference type="AGR" id="Xenbase:XB-GENE-943703"/>
<dbReference type="CTD" id="7126"/>
<dbReference type="Xenbase" id="XB-GENE-943703">
    <property type="gene designation" value="tnfaip1"/>
</dbReference>
<dbReference type="eggNOG" id="KOG2716">
    <property type="taxonomic scope" value="Eukaryota"/>
</dbReference>
<dbReference type="HOGENOM" id="CLU_060008_0_0_1"/>
<dbReference type="InParanoid" id="Q28DC9"/>
<dbReference type="OMA" id="EMSGDTC"/>
<dbReference type="OrthoDB" id="2333377at2759"/>
<dbReference type="PhylomeDB" id="Q28DC9"/>
<dbReference type="Reactome" id="R-XTR-9696264">
    <property type="pathway name" value="RND3 GTPase cycle"/>
</dbReference>
<dbReference type="UniPathway" id="UPA00143"/>
<dbReference type="Proteomes" id="UP000008143">
    <property type="component" value="Chromosome 2"/>
</dbReference>
<dbReference type="Bgee" id="ENSXETG00000019443">
    <property type="expression patterns" value="Expressed in 2-cell stage embryo and 14 other cell types or tissues"/>
</dbReference>
<dbReference type="ExpressionAtlas" id="Q28DC9">
    <property type="expression patterns" value="baseline"/>
</dbReference>
<dbReference type="GO" id="GO:0031463">
    <property type="term" value="C:Cul3-RING ubiquitin ligase complex"/>
    <property type="evidence" value="ECO:0000250"/>
    <property type="project" value="UniProtKB"/>
</dbReference>
<dbReference type="GO" id="GO:0005737">
    <property type="term" value="C:cytoplasm"/>
    <property type="evidence" value="ECO:0000250"/>
    <property type="project" value="UniProtKB"/>
</dbReference>
<dbReference type="GO" id="GO:0005768">
    <property type="term" value="C:endosome"/>
    <property type="evidence" value="ECO:0000250"/>
    <property type="project" value="UniProtKB"/>
</dbReference>
<dbReference type="GO" id="GO:0005634">
    <property type="term" value="C:nucleus"/>
    <property type="evidence" value="ECO:0007669"/>
    <property type="project" value="UniProtKB-SubCell"/>
</dbReference>
<dbReference type="GO" id="GO:0031267">
    <property type="term" value="F:small GTPase binding"/>
    <property type="evidence" value="ECO:0000250"/>
    <property type="project" value="UniProtKB"/>
</dbReference>
<dbReference type="GO" id="GO:0016477">
    <property type="term" value="P:cell migration"/>
    <property type="evidence" value="ECO:0000250"/>
    <property type="project" value="UniProtKB"/>
</dbReference>
<dbReference type="GO" id="GO:0006955">
    <property type="term" value="P:immune response"/>
    <property type="evidence" value="ECO:0000250"/>
    <property type="project" value="UniProtKB"/>
</dbReference>
<dbReference type="GO" id="GO:0035024">
    <property type="term" value="P:negative regulation of Rho protein signal transduction"/>
    <property type="evidence" value="ECO:0000250"/>
    <property type="project" value="UniProtKB"/>
</dbReference>
<dbReference type="GO" id="GO:0043161">
    <property type="term" value="P:proteasome-mediated ubiquitin-dependent protein catabolic process"/>
    <property type="evidence" value="ECO:0000250"/>
    <property type="project" value="UniProtKB"/>
</dbReference>
<dbReference type="GO" id="GO:0051260">
    <property type="term" value="P:protein homooligomerization"/>
    <property type="evidence" value="ECO:0007669"/>
    <property type="project" value="InterPro"/>
</dbReference>
<dbReference type="GO" id="GO:0016567">
    <property type="term" value="P:protein ubiquitination"/>
    <property type="evidence" value="ECO:0000250"/>
    <property type="project" value="UniProtKB"/>
</dbReference>
<dbReference type="GO" id="GO:0043149">
    <property type="term" value="P:stress fiber assembly"/>
    <property type="evidence" value="ECO:0000250"/>
    <property type="project" value="UniProtKB"/>
</dbReference>
<dbReference type="CDD" id="cd18401">
    <property type="entry name" value="BTB_POZ_TNFAIP1_BACURD2"/>
    <property type="match status" value="1"/>
</dbReference>
<dbReference type="FunFam" id="3.30.710.10:FF:000013">
    <property type="entry name" value="BTB/POZ domain-containing adapter for CUL3-mediated RhoA degradation protein 3"/>
    <property type="match status" value="1"/>
</dbReference>
<dbReference type="Gene3D" id="3.30.710.10">
    <property type="entry name" value="Potassium Channel Kv1.1, Chain A"/>
    <property type="match status" value="1"/>
</dbReference>
<dbReference type="InterPro" id="IPR045068">
    <property type="entry name" value="BACURD1-3"/>
</dbReference>
<dbReference type="InterPro" id="IPR000210">
    <property type="entry name" value="BTB/POZ_dom"/>
</dbReference>
<dbReference type="InterPro" id="IPR011333">
    <property type="entry name" value="SKP1/BTB/POZ_sf"/>
</dbReference>
<dbReference type="InterPro" id="IPR003131">
    <property type="entry name" value="T1-type_BTB"/>
</dbReference>
<dbReference type="PANTHER" id="PTHR11145">
    <property type="entry name" value="BTB/POZ DOMAIN-CONTAINING ADAPTER FOR CUL3-MEDIATED RHOA DEGRADATION PROTEIN FAMILY MEMBER"/>
    <property type="match status" value="1"/>
</dbReference>
<dbReference type="PANTHER" id="PTHR11145:SF17">
    <property type="entry name" value="BTB_POZ DOMAIN-CONTAINING ADAPTER FOR CUL3-MEDIATED RHOA DEGRADATION PROTEIN 2"/>
    <property type="match status" value="1"/>
</dbReference>
<dbReference type="Pfam" id="PF02214">
    <property type="entry name" value="BTB_2"/>
    <property type="match status" value="1"/>
</dbReference>
<dbReference type="SMART" id="SM00225">
    <property type="entry name" value="BTB"/>
    <property type="match status" value="1"/>
</dbReference>
<dbReference type="SUPFAM" id="SSF54695">
    <property type="entry name" value="POZ domain"/>
    <property type="match status" value="1"/>
</dbReference>
<dbReference type="PROSITE" id="PS50097">
    <property type="entry name" value="BTB"/>
    <property type="match status" value="1"/>
</dbReference>
<accession>Q28DC9</accession>
<keyword id="KW-0963">Cytoplasm</keyword>
<keyword id="KW-0967">Endosome</keyword>
<keyword id="KW-0539">Nucleus</keyword>
<keyword id="KW-1185">Reference proteome</keyword>
<keyword id="KW-0833">Ubl conjugation pathway</keyword>
<sequence>MSGDTCLTAVCPASGAKPKTYSFKGGCLGNKYIRLNVGGCLYYTTVQVLTRHDTMLKAMFSGRMEVLTDKEGWILIDRCGKHFGSILNYLRDDTITLPKSRHEVKELMAEAKYYLIQGLVDKCQAALQDKNDTYEAVCNIPIITSPKEEEKLIESSAKPVVKLLYNRSNNKYSYTSNSDDNLLKNIELFDKLSLRFNGRVLFIKDVIGDEICCWSFYGQGRKLAEVCCTSIVYATEKKQTKVEFPEARIYEETLNVLLYETPRVPDNSLLEATSRTRSQASHSEDDEGFELRDRVRRIHVKRYSTYDDRQLGHQSAYRD</sequence>
<evidence type="ECO:0000250" key="1"/>
<evidence type="ECO:0000255" key="2">
    <source>
        <dbReference type="PROSITE-ProRule" id="PRU00037"/>
    </source>
</evidence>
<evidence type="ECO:0000305" key="3"/>
<name>BACD2_XENTR</name>
<protein>
    <recommendedName>
        <fullName>BTB/POZ domain-containing adapter for CUL3-mediated RhoA degradation protein 2</fullName>
    </recommendedName>
    <alternativeName>
        <fullName>BTB/POZ domain-containing protein TNFAIP1</fullName>
    </alternativeName>
</protein>
<organism>
    <name type="scientific">Xenopus tropicalis</name>
    <name type="common">Western clawed frog</name>
    <name type="synonym">Silurana tropicalis</name>
    <dbReference type="NCBI Taxonomy" id="8364"/>
    <lineage>
        <taxon>Eukaryota</taxon>
        <taxon>Metazoa</taxon>
        <taxon>Chordata</taxon>
        <taxon>Craniata</taxon>
        <taxon>Vertebrata</taxon>
        <taxon>Euteleostomi</taxon>
        <taxon>Amphibia</taxon>
        <taxon>Batrachia</taxon>
        <taxon>Anura</taxon>
        <taxon>Pipoidea</taxon>
        <taxon>Pipidae</taxon>
        <taxon>Xenopodinae</taxon>
        <taxon>Xenopus</taxon>
        <taxon>Silurana</taxon>
    </lineage>
</organism>
<gene>
    <name type="primary">tnfaip1</name>
    <name type="ORF">TEgg017p05.1</name>
</gene>
<reference key="1">
    <citation type="submission" date="2006-10" db="EMBL/GenBank/DDBJ databases">
        <authorList>
            <consortium name="Sanger Xenopus tropicalis EST/cDNA project"/>
        </authorList>
    </citation>
    <scope>NUCLEOTIDE SEQUENCE [LARGE SCALE MRNA]</scope>
    <source>
        <tissue>Egg</tissue>
    </source>
</reference>
<reference key="2">
    <citation type="submission" date="2007-03" db="EMBL/GenBank/DDBJ databases">
        <authorList>
            <consortium name="NIH - Xenopus Gene Collection (XGC) project"/>
        </authorList>
    </citation>
    <scope>NUCLEOTIDE SEQUENCE [LARGE SCALE MRNA]</scope>
    <source>
        <tissue>Embryo</tissue>
    </source>
</reference>
<comment type="function">
    <text evidence="1">Substrate-specific adapter of a BCR (BTB-CUL3-RBX1) E3 ubiquitin-protein ligase complex involved in regulation of cytoskeleton structure. The BCR(TNFAIP1) E3 ubiquitin ligase complex mediates the ubiquitination of target proteins, leading to their degradation by the proteasome (By similarity).</text>
</comment>
<comment type="pathway">
    <text>Protein modification; protein ubiquitination.</text>
</comment>
<comment type="subunit">
    <text>Component of the BCR(TNFAIP1) E3 ubiquitin ligase complex, at least composed of cul3, tnfaip1/bacurd2 and rbx1.</text>
</comment>
<comment type="subcellular location">
    <subcellularLocation>
        <location evidence="1">Cytoplasm</location>
    </subcellularLocation>
    <subcellularLocation>
        <location evidence="1">Nucleus</location>
    </subcellularLocation>
    <subcellularLocation>
        <location evidence="1">Endosome</location>
    </subcellularLocation>
</comment>
<comment type="similarity">
    <text evidence="3">Belongs to the BACURD family.</text>
</comment>
<proteinExistence type="evidence at transcript level"/>
<feature type="chain" id="PRO_0000331252" description="BTB/POZ domain-containing adapter for CUL3-mediated RhoA degradation protein 2">
    <location>
        <begin position="1"/>
        <end position="319"/>
    </location>
</feature>
<feature type="domain" description="BTB" evidence="2">
    <location>
        <begin position="31"/>
        <end position="99"/>
    </location>
</feature>